<accession>Q6MMK3</accession>
<proteinExistence type="inferred from homology"/>
<organism>
    <name type="scientific">Bdellovibrio bacteriovorus (strain ATCC 15356 / DSM 50701 / NCIMB 9529 / HD100)</name>
    <dbReference type="NCBI Taxonomy" id="264462"/>
    <lineage>
        <taxon>Bacteria</taxon>
        <taxon>Pseudomonadati</taxon>
        <taxon>Bdellovibrionota</taxon>
        <taxon>Bdellovibrionia</taxon>
        <taxon>Bdellovibrionales</taxon>
        <taxon>Pseudobdellovibrionaceae</taxon>
        <taxon>Bdellovibrio</taxon>
    </lineage>
</organism>
<sequence length="115" mass="12875">MARVKSGKTNRARHKKVLKRAKGYYSAGSRAYIHAVEKNDRGMAFAYRDRKVNKRNFRTLWNQRINAAARLNGTTYSRLIGGLIKAGIQVDRKILADLAINDAAAFTALCKHALA</sequence>
<evidence type="ECO:0000255" key="1">
    <source>
        <dbReference type="HAMAP-Rule" id="MF_00382"/>
    </source>
</evidence>
<evidence type="ECO:0000305" key="2"/>
<keyword id="KW-1185">Reference proteome</keyword>
<keyword id="KW-0687">Ribonucleoprotein</keyword>
<keyword id="KW-0689">Ribosomal protein</keyword>
<keyword id="KW-0694">RNA-binding</keyword>
<keyword id="KW-0699">rRNA-binding</keyword>
<gene>
    <name evidence="1" type="primary">rplT</name>
    <name type="ordered locus">Bd1625</name>
</gene>
<protein>
    <recommendedName>
        <fullName evidence="1">Large ribosomal subunit protein bL20</fullName>
    </recommendedName>
    <alternativeName>
        <fullName evidence="2">50S ribosomal protein L20</fullName>
    </alternativeName>
</protein>
<feature type="chain" id="PRO_0000177122" description="Large ribosomal subunit protein bL20">
    <location>
        <begin position="1"/>
        <end position="115"/>
    </location>
</feature>
<dbReference type="EMBL" id="BX842650">
    <property type="protein sequence ID" value="CAE79501.1"/>
    <property type="molecule type" value="Genomic_DNA"/>
</dbReference>
<dbReference type="RefSeq" id="WP_011164103.1">
    <property type="nucleotide sequence ID" value="NC_005363.1"/>
</dbReference>
<dbReference type="SMR" id="Q6MMK3"/>
<dbReference type="STRING" id="264462.Bd1625"/>
<dbReference type="GeneID" id="93012615"/>
<dbReference type="KEGG" id="bba:Bd1625"/>
<dbReference type="eggNOG" id="COG0292">
    <property type="taxonomic scope" value="Bacteria"/>
</dbReference>
<dbReference type="HOGENOM" id="CLU_123265_0_1_7"/>
<dbReference type="Proteomes" id="UP000008080">
    <property type="component" value="Chromosome"/>
</dbReference>
<dbReference type="GO" id="GO:1990904">
    <property type="term" value="C:ribonucleoprotein complex"/>
    <property type="evidence" value="ECO:0007669"/>
    <property type="project" value="UniProtKB-KW"/>
</dbReference>
<dbReference type="GO" id="GO:0005840">
    <property type="term" value="C:ribosome"/>
    <property type="evidence" value="ECO:0007669"/>
    <property type="project" value="UniProtKB-KW"/>
</dbReference>
<dbReference type="GO" id="GO:0019843">
    <property type="term" value="F:rRNA binding"/>
    <property type="evidence" value="ECO:0007669"/>
    <property type="project" value="UniProtKB-UniRule"/>
</dbReference>
<dbReference type="GO" id="GO:0003735">
    <property type="term" value="F:structural constituent of ribosome"/>
    <property type="evidence" value="ECO:0007669"/>
    <property type="project" value="InterPro"/>
</dbReference>
<dbReference type="GO" id="GO:0000027">
    <property type="term" value="P:ribosomal large subunit assembly"/>
    <property type="evidence" value="ECO:0007669"/>
    <property type="project" value="UniProtKB-UniRule"/>
</dbReference>
<dbReference type="GO" id="GO:0006412">
    <property type="term" value="P:translation"/>
    <property type="evidence" value="ECO:0007669"/>
    <property type="project" value="InterPro"/>
</dbReference>
<dbReference type="CDD" id="cd07026">
    <property type="entry name" value="Ribosomal_L20"/>
    <property type="match status" value="1"/>
</dbReference>
<dbReference type="FunFam" id="1.10.1900.20:FF:000001">
    <property type="entry name" value="50S ribosomal protein L20"/>
    <property type="match status" value="1"/>
</dbReference>
<dbReference type="Gene3D" id="6.10.160.10">
    <property type="match status" value="1"/>
</dbReference>
<dbReference type="Gene3D" id="1.10.1900.20">
    <property type="entry name" value="Ribosomal protein L20"/>
    <property type="match status" value="1"/>
</dbReference>
<dbReference type="HAMAP" id="MF_00382">
    <property type="entry name" value="Ribosomal_bL20"/>
    <property type="match status" value="1"/>
</dbReference>
<dbReference type="InterPro" id="IPR005813">
    <property type="entry name" value="Ribosomal_bL20"/>
</dbReference>
<dbReference type="InterPro" id="IPR049946">
    <property type="entry name" value="RIBOSOMAL_L20_CS"/>
</dbReference>
<dbReference type="InterPro" id="IPR035566">
    <property type="entry name" value="Ribosomal_protein_bL20_C"/>
</dbReference>
<dbReference type="NCBIfam" id="TIGR01032">
    <property type="entry name" value="rplT_bact"/>
    <property type="match status" value="1"/>
</dbReference>
<dbReference type="PANTHER" id="PTHR10986">
    <property type="entry name" value="39S RIBOSOMAL PROTEIN L20"/>
    <property type="match status" value="1"/>
</dbReference>
<dbReference type="Pfam" id="PF00453">
    <property type="entry name" value="Ribosomal_L20"/>
    <property type="match status" value="1"/>
</dbReference>
<dbReference type="PRINTS" id="PR00062">
    <property type="entry name" value="RIBOSOMALL20"/>
</dbReference>
<dbReference type="SUPFAM" id="SSF74731">
    <property type="entry name" value="Ribosomal protein L20"/>
    <property type="match status" value="1"/>
</dbReference>
<dbReference type="PROSITE" id="PS00937">
    <property type="entry name" value="RIBOSOMAL_L20"/>
    <property type="match status" value="1"/>
</dbReference>
<comment type="function">
    <text evidence="1">Binds directly to 23S ribosomal RNA and is necessary for the in vitro assembly process of the 50S ribosomal subunit. It is not involved in the protein synthesizing functions of that subunit.</text>
</comment>
<comment type="similarity">
    <text evidence="1">Belongs to the bacterial ribosomal protein bL20 family.</text>
</comment>
<name>RL20_BDEBA</name>
<reference key="1">
    <citation type="journal article" date="2004" name="Science">
        <title>A predator unmasked: life cycle of Bdellovibrio bacteriovorus from a genomic perspective.</title>
        <authorList>
            <person name="Rendulic S."/>
            <person name="Jagtap P."/>
            <person name="Rosinus A."/>
            <person name="Eppinger M."/>
            <person name="Baar C."/>
            <person name="Lanz C."/>
            <person name="Keller H."/>
            <person name="Lambert C."/>
            <person name="Evans K.J."/>
            <person name="Goesmann A."/>
            <person name="Meyer F."/>
            <person name="Sockett R.E."/>
            <person name="Schuster S.C."/>
        </authorList>
    </citation>
    <scope>NUCLEOTIDE SEQUENCE [LARGE SCALE GENOMIC DNA]</scope>
    <source>
        <strain>ATCC 15356 / DSM 50701 / NCIMB 9529 / HD100</strain>
    </source>
</reference>